<proteinExistence type="inferred from homology"/>
<gene>
    <name evidence="1" type="primary">argS</name>
    <name type="ordered locus">Mkms_3972</name>
</gene>
<keyword id="KW-0030">Aminoacyl-tRNA synthetase</keyword>
<keyword id="KW-0067">ATP-binding</keyword>
<keyword id="KW-0963">Cytoplasm</keyword>
<keyword id="KW-0436">Ligase</keyword>
<keyword id="KW-0547">Nucleotide-binding</keyword>
<keyword id="KW-0648">Protein biosynthesis</keyword>
<organism>
    <name type="scientific">Mycobacterium sp. (strain KMS)</name>
    <dbReference type="NCBI Taxonomy" id="189918"/>
    <lineage>
        <taxon>Bacteria</taxon>
        <taxon>Bacillati</taxon>
        <taxon>Actinomycetota</taxon>
        <taxon>Actinomycetes</taxon>
        <taxon>Mycobacteriales</taxon>
        <taxon>Mycobacteriaceae</taxon>
        <taxon>Mycobacterium</taxon>
    </lineage>
</organism>
<protein>
    <recommendedName>
        <fullName evidence="1">Arginine--tRNA ligase</fullName>
        <ecNumber evidence="1">6.1.1.19</ecNumber>
    </recommendedName>
    <alternativeName>
        <fullName evidence="1">Arginyl-tRNA synthetase</fullName>
        <shortName evidence="1">ArgRS</shortName>
    </alternativeName>
</protein>
<evidence type="ECO:0000255" key="1">
    <source>
        <dbReference type="HAMAP-Rule" id="MF_00123"/>
    </source>
</evidence>
<name>SYR_MYCSK</name>
<reference key="1">
    <citation type="submission" date="2006-12" db="EMBL/GenBank/DDBJ databases">
        <title>Complete sequence of chromosome of Mycobacterium sp. KMS.</title>
        <authorList>
            <consortium name="US DOE Joint Genome Institute"/>
            <person name="Copeland A."/>
            <person name="Lucas S."/>
            <person name="Lapidus A."/>
            <person name="Barry K."/>
            <person name="Detter J.C."/>
            <person name="Glavina del Rio T."/>
            <person name="Hammon N."/>
            <person name="Israni S."/>
            <person name="Dalin E."/>
            <person name="Tice H."/>
            <person name="Pitluck S."/>
            <person name="Kiss H."/>
            <person name="Brettin T."/>
            <person name="Bruce D."/>
            <person name="Han C."/>
            <person name="Tapia R."/>
            <person name="Gilna P."/>
            <person name="Schmutz J."/>
            <person name="Larimer F."/>
            <person name="Land M."/>
            <person name="Hauser L."/>
            <person name="Kyrpides N."/>
            <person name="Mikhailova N."/>
            <person name="Miller C.D."/>
            <person name="Richardson P."/>
        </authorList>
    </citation>
    <scope>NUCLEOTIDE SEQUENCE [LARGE SCALE GENOMIC DNA]</scope>
    <source>
        <strain>KMS</strain>
    </source>
</reference>
<sequence length="550" mass="59279">MTPADLADLLRTTATAVLTERDLDTAALPATVTVERPRNPEHGDYATNLALQVGKKVGVNPRELAGWLAEALTATAGIASAEVAGPGFVNLRIEAAAQNVIVGDIITSAERYGHSAALAERNINLEFVSANPTGPIHIGGTRWAAVGDALGRLLATQGAAVVREYYFNDHGAQIDRFVSSLIAAAKGEPTPEDGYAGSYIGDIAAQVLAKDPGALELPDDEMRETFRAIGVDLMFDHIKISLHDFGTDFDVFTHEDSMHTSGRVEEAIARLRENGAIYEKDGATWLRTTDFGDDKDRVVIKSDGAPAYIAGDLAYFLDKRQRGFDLCIYMLGADHHGYIARLKAAAAALGDDPDTVEVMIGQMVNLVRDGQPVRMSKRAGTVITLDDLVEAIGVDAARYSLIRSSVDTPIDIDLALWSSASNENPVYYVQYAHARLSALARNAADLGVVADTAHLDLLTHDKEGTLIRNLGEFPRVLESAAALREPHRVCRYLEDLAGDYHRFYDSCRVLPQGDEAPGSLHQARLALCQATRQVIANGLAILGVSAPERM</sequence>
<dbReference type="EC" id="6.1.1.19" evidence="1"/>
<dbReference type="EMBL" id="CP000518">
    <property type="protein sequence ID" value="ABL93164.1"/>
    <property type="molecule type" value="Genomic_DNA"/>
</dbReference>
<dbReference type="SMR" id="A1UK06"/>
<dbReference type="STRING" id="189918.Mkms_3972"/>
<dbReference type="KEGG" id="mkm:Mkms_3972"/>
<dbReference type="HOGENOM" id="CLU_006406_0_1_11"/>
<dbReference type="OrthoDB" id="9803211at2"/>
<dbReference type="GO" id="GO:0005737">
    <property type="term" value="C:cytoplasm"/>
    <property type="evidence" value="ECO:0007669"/>
    <property type="project" value="UniProtKB-SubCell"/>
</dbReference>
<dbReference type="GO" id="GO:0004814">
    <property type="term" value="F:arginine-tRNA ligase activity"/>
    <property type="evidence" value="ECO:0007669"/>
    <property type="project" value="UniProtKB-UniRule"/>
</dbReference>
<dbReference type="GO" id="GO:0005524">
    <property type="term" value="F:ATP binding"/>
    <property type="evidence" value="ECO:0007669"/>
    <property type="project" value="UniProtKB-UniRule"/>
</dbReference>
<dbReference type="GO" id="GO:0006420">
    <property type="term" value="P:arginyl-tRNA aminoacylation"/>
    <property type="evidence" value="ECO:0007669"/>
    <property type="project" value="UniProtKB-UniRule"/>
</dbReference>
<dbReference type="CDD" id="cd07956">
    <property type="entry name" value="Anticodon_Ia_Arg"/>
    <property type="match status" value="1"/>
</dbReference>
<dbReference type="CDD" id="cd00671">
    <property type="entry name" value="ArgRS_core"/>
    <property type="match status" value="1"/>
</dbReference>
<dbReference type="FunFam" id="1.10.730.10:FF:000008">
    <property type="entry name" value="Arginine--tRNA ligase"/>
    <property type="match status" value="1"/>
</dbReference>
<dbReference type="FunFam" id="3.40.50.620:FF:000062">
    <property type="entry name" value="Arginine--tRNA ligase"/>
    <property type="match status" value="1"/>
</dbReference>
<dbReference type="Gene3D" id="3.30.1360.70">
    <property type="entry name" value="Arginyl tRNA synthetase N-terminal domain"/>
    <property type="match status" value="1"/>
</dbReference>
<dbReference type="Gene3D" id="3.40.50.620">
    <property type="entry name" value="HUPs"/>
    <property type="match status" value="1"/>
</dbReference>
<dbReference type="Gene3D" id="1.10.730.10">
    <property type="entry name" value="Isoleucyl-tRNA Synthetase, Domain 1"/>
    <property type="match status" value="1"/>
</dbReference>
<dbReference type="HAMAP" id="MF_00123">
    <property type="entry name" value="Arg_tRNA_synth"/>
    <property type="match status" value="1"/>
</dbReference>
<dbReference type="InterPro" id="IPR001412">
    <property type="entry name" value="aa-tRNA-synth_I_CS"/>
</dbReference>
<dbReference type="InterPro" id="IPR001278">
    <property type="entry name" value="Arg-tRNA-ligase"/>
</dbReference>
<dbReference type="InterPro" id="IPR005148">
    <property type="entry name" value="Arg-tRNA-synth_N"/>
</dbReference>
<dbReference type="InterPro" id="IPR036695">
    <property type="entry name" value="Arg-tRNA-synth_N_sf"/>
</dbReference>
<dbReference type="InterPro" id="IPR035684">
    <property type="entry name" value="ArgRS_core"/>
</dbReference>
<dbReference type="InterPro" id="IPR008909">
    <property type="entry name" value="DALR_anticod-bd"/>
</dbReference>
<dbReference type="InterPro" id="IPR014729">
    <property type="entry name" value="Rossmann-like_a/b/a_fold"/>
</dbReference>
<dbReference type="InterPro" id="IPR009080">
    <property type="entry name" value="tRNAsynth_Ia_anticodon-bd"/>
</dbReference>
<dbReference type="NCBIfam" id="TIGR00456">
    <property type="entry name" value="argS"/>
    <property type="match status" value="1"/>
</dbReference>
<dbReference type="PANTHER" id="PTHR11956:SF5">
    <property type="entry name" value="ARGININE--TRNA LIGASE, CYTOPLASMIC"/>
    <property type="match status" value="1"/>
</dbReference>
<dbReference type="PANTHER" id="PTHR11956">
    <property type="entry name" value="ARGINYL-TRNA SYNTHETASE"/>
    <property type="match status" value="1"/>
</dbReference>
<dbReference type="Pfam" id="PF03485">
    <property type="entry name" value="Arg_tRNA_synt_N"/>
    <property type="match status" value="1"/>
</dbReference>
<dbReference type="Pfam" id="PF05746">
    <property type="entry name" value="DALR_1"/>
    <property type="match status" value="1"/>
</dbReference>
<dbReference type="Pfam" id="PF00750">
    <property type="entry name" value="tRNA-synt_1d"/>
    <property type="match status" value="1"/>
</dbReference>
<dbReference type="PRINTS" id="PR01038">
    <property type="entry name" value="TRNASYNTHARG"/>
</dbReference>
<dbReference type="SMART" id="SM01016">
    <property type="entry name" value="Arg_tRNA_synt_N"/>
    <property type="match status" value="1"/>
</dbReference>
<dbReference type="SMART" id="SM00836">
    <property type="entry name" value="DALR_1"/>
    <property type="match status" value="1"/>
</dbReference>
<dbReference type="SUPFAM" id="SSF47323">
    <property type="entry name" value="Anticodon-binding domain of a subclass of class I aminoacyl-tRNA synthetases"/>
    <property type="match status" value="1"/>
</dbReference>
<dbReference type="SUPFAM" id="SSF55190">
    <property type="entry name" value="Arginyl-tRNA synthetase (ArgRS), N-terminal 'additional' domain"/>
    <property type="match status" value="1"/>
</dbReference>
<dbReference type="SUPFAM" id="SSF52374">
    <property type="entry name" value="Nucleotidylyl transferase"/>
    <property type="match status" value="1"/>
</dbReference>
<dbReference type="PROSITE" id="PS00178">
    <property type="entry name" value="AA_TRNA_LIGASE_I"/>
    <property type="match status" value="1"/>
</dbReference>
<accession>A1UK06</accession>
<feature type="chain" id="PRO_1000018070" description="Arginine--tRNA ligase">
    <location>
        <begin position="1"/>
        <end position="550"/>
    </location>
</feature>
<feature type="short sequence motif" description="'HIGH' region">
    <location>
        <begin position="130"/>
        <end position="140"/>
    </location>
</feature>
<comment type="catalytic activity">
    <reaction evidence="1">
        <text>tRNA(Arg) + L-arginine + ATP = L-arginyl-tRNA(Arg) + AMP + diphosphate</text>
        <dbReference type="Rhea" id="RHEA:20301"/>
        <dbReference type="Rhea" id="RHEA-COMP:9658"/>
        <dbReference type="Rhea" id="RHEA-COMP:9673"/>
        <dbReference type="ChEBI" id="CHEBI:30616"/>
        <dbReference type="ChEBI" id="CHEBI:32682"/>
        <dbReference type="ChEBI" id="CHEBI:33019"/>
        <dbReference type="ChEBI" id="CHEBI:78442"/>
        <dbReference type="ChEBI" id="CHEBI:78513"/>
        <dbReference type="ChEBI" id="CHEBI:456215"/>
        <dbReference type="EC" id="6.1.1.19"/>
    </reaction>
</comment>
<comment type="subunit">
    <text evidence="1">Monomer.</text>
</comment>
<comment type="subcellular location">
    <subcellularLocation>
        <location evidence="1">Cytoplasm</location>
    </subcellularLocation>
</comment>
<comment type="similarity">
    <text evidence="1">Belongs to the class-I aminoacyl-tRNA synthetase family.</text>
</comment>